<dbReference type="EC" id="3.6.5.-" evidence="1"/>
<dbReference type="EMBL" id="CP000947">
    <property type="protein sequence ID" value="ACA30934.1"/>
    <property type="molecule type" value="Genomic_DNA"/>
</dbReference>
<dbReference type="RefSeq" id="WP_012340385.1">
    <property type="nucleotide sequence ID" value="NC_010519.1"/>
</dbReference>
<dbReference type="SMR" id="B0UVI2"/>
<dbReference type="STRING" id="228400.HSM_0121"/>
<dbReference type="GeneID" id="31486396"/>
<dbReference type="KEGG" id="hsm:HSM_0121"/>
<dbReference type="HOGENOM" id="CLU_011747_2_0_6"/>
<dbReference type="GO" id="GO:0005737">
    <property type="term" value="C:cytoplasm"/>
    <property type="evidence" value="ECO:0007669"/>
    <property type="project" value="UniProtKB-SubCell"/>
</dbReference>
<dbReference type="GO" id="GO:0005525">
    <property type="term" value="F:GTP binding"/>
    <property type="evidence" value="ECO:0007669"/>
    <property type="project" value="UniProtKB-UniRule"/>
</dbReference>
<dbReference type="GO" id="GO:0003924">
    <property type="term" value="F:GTPase activity"/>
    <property type="evidence" value="ECO:0007669"/>
    <property type="project" value="UniProtKB-UniRule"/>
</dbReference>
<dbReference type="GO" id="GO:0000287">
    <property type="term" value="F:magnesium ion binding"/>
    <property type="evidence" value="ECO:0007669"/>
    <property type="project" value="InterPro"/>
</dbReference>
<dbReference type="GO" id="GO:0042254">
    <property type="term" value="P:ribosome biogenesis"/>
    <property type="evidence" value="ECO:0007669"/>
    <property type="project" value="UniProtKB-UniRule"/>
</dbReference>
<dbReference type="CDD" id="cd01898">
    <property type="entry name" value="Obg"/>
    <property type="match status" value="1"/>
</dbReference>
<dbReference type="FunFam" id="2.70.210.12:FF:000001">
    <property type="entry name" value="GTPase Obg"/>
    <property type="match status" value="1"/>
</dbReference>
<dbReference type="Gene3D" id="2.70.210.12">
    <property type="entry name" value="GTP1/OBG domain"/>
    <property type="match status" value="1"/>
</dbReference>
<dbReference type="Gene3D" id="3.40.50.300">
    <property type="entry name" value="P-loop containing nucleotide triphosphate hydrolases"/>
    <property type="match status" value="1"/>
</dbReference>
<dbReference type="HAMAP" id="MF_01454">
    <property type="entry name" value="GTPase_Obg"/>
    <property type="match status" value="1"/>
</dbReference>
<dbReference type="InterPro" id="IPR031167">
    <property type="entry name" value="G_OBG"/>
</dbReference>
<dbReference type="InterPro" id="IPR006073">
    <property type="entry name" value="GTP-bd"/>
</dbReference>
<dbReference type="InterPro" id="IPR014100">
    <property type="entry name" value="GTP-bd_Obg/CgtA"/>
</dbReference>
<dbReference type="InterPro" id="IPR006074">
    <property type="entry name" value="GTP1-OBG_CS"/>
</dbReference>
<dbReference type="InterPro" id="IPR006169">
    <property type="entry name" value="GTP1_OBG_dom"/>
</dbReference>
<dbReference type="InterPro" id="IPR036726">
    <property type="entry name" value="GTP1_OBG_dom_sf"/>
</dbReference>
<dbReference type="InterPro" id="IPR045086">
    <property type="entry name" value="OBG_GTPase"/>
</dbReference>
<dbReference type="InterPro" id="IPR027417">
    <property type="entry name" value="P-loop_NTPase"/>
</dbReference>
<dbReference type="NCBIfam" id="TIGR02729">
    <property type="entry name" value="Obg_CgtA"/>
    <property type="match status" value="1"/>
</dbReference>
<dbReference type="NCBIfam" id="NF008955">
    <property type="entry name" value="PRK12297.1"/>
    <property type="match status" value="1"/>
</dbReference>
<dbReference type="NCBIfam" id="NF008956">
    <property type="entry name" value="PRK12299.1"/>
    <property type="match status" value="1"/>
</dbReference>
<dbReference type="PANTHER" id="PTHR11702">
    <property type="entry name" value="DEVELOPMENTALLY REGULATED GTP-BINDING PROTEIN-RELATED"/>
    <property type="match status" value="1"/>
</dbReference>
<dbReference type="PANTHER" id="PTHR11702:SF31">
    <property type="entry name" value="MITOCHONDRIAL RIBOSOME-ASSOCIATED GTPASE 2"/>
    <property type="match status" value="1"/>
</dbReference>
<dbReference type="Pfam" id="PF01018">
    <property type="entry name" value="GTP1_OBG"/>
    <property type="match status" value="1"/>
</dbReference>
<dbReference type="Pfam" id="PF01926">
    <property type="entry name" value="MMR_HSR1"/>
    <property type="match status" value="1"/>
</dbReference>
<dbReference type="PIRSF" id="PIRSF002401">
    <property type="entry name" value="GTP_bd_Obg/CgtA"/>
    <property type="match status" value="1"/>
</dbReference>
<dbReference type="PRINTS" id="PR00326">
    <property type="entry name" value="GTP1OBG"/>
</dbReference>
<dbReference type="SUPFAM" id="SSF82051">
    <property type="entry name" value="Obg GTP-binding protein N-terminal domain"/>
    <property type="match status" value="1"/>
</dbReference>
<dbReference type="SUPFAM" id="SSF52540">
    <property type="entry name" value="P-loop containing nucleoside triphosphate hydrolases"/>
    <property type="match status" value="1"/>
</dbReference>
<dbReference type="PROSITE" id="PS51710">
    <property type="entry name" value="G_OBG"/>
    <property type="match status" value="1"/>
</dbReference>
<dbReference type="PROSITE" id="PS00905">
    <property type="entry name" value="GTP1_OBG"/>
    <property type="match status" value="1"/>
</dbReference>
<dbReference type="PROSITE" id="PS51883">
    <property type="entry name" value="OBG"/>
    <property type="match status" value="1"/>
</dbReference>
<proteinExistence type="inferred from homology"/>
<sequence>MKFIDEALIRIEAGDGGNGCVSFRREKFIPKGGPDGGDGGDGGDVYLIADENLNTLIDYRFEKSFAAERGENGRSSDCTGRRGKDITLRVPVGTRAIDNDTKEVLGDLTKHGTKMLVAKGGYHGLGNARFKSSVNRAPRQKTNGTPGEKRDLQLELMLLADVGMLGLPNAGKSTFIRAVSAAKPKVADYPFTTLVPSLGVTRVDTSRSFVIADIPGLIEGASEGAGLGVRFLKHLERCHVLIHLVDIAPIDESDPADNIAIIEGELFQYSEKLANKPRWLVFNKIDILSDEEATARAKNIMQRLGGEDDYYLISAATGKNVDVLCRDIMDFIEENPRQEQEKIDAQEVKFKWDDYHQEQLSEQVFTEDDQEEDDWDDWSEDDEEGVEIIYKP</sequence>
<comment type="function">
    <text evidence="1">An essential GTPase which binds GTP, GDP and possibly (p)ppGpp with moderate affinity, with high nucleotide exchange rates and a fairly low GTP hydrolysis rate. Plays a role in control of the cell cycle, stress response, ribosome biogenesis and in those bacteria that undergo differentiation, in morphogenesis control.</text>
</comment>
<comment type="cofactor">
    <cofactor evidence="1">
        <name>Mg(2+)</name>
        <dbReference type="ChEBI" id="CHEBI:18420"/>
    </cofactor>
</comment>
<comment type="subunit">
    <text evidence="1">Monomer.</text>
</comment>
<comment type="subcellular location">
    <subcellularLocation>
        <location evidence="1">Cytoplasm</location>
    </subcellularLocation>
</comment>
<comment type="similarity">
    <text evidence="1">Belongs to the TRAFAC class OBG-HflX-like GTPase superfamily. OBG GTPase family.</text>
</comment>
<gene>
    <name evidence="1" type="primary">obg</name>
    <name type="ordered locus">HSM_0121</name>
</gene>
<evidence type="ECO:0000255" key="1">
    <source>
        <dbReference type="HAMAP-Rule" id="MF_01454"/>
    </source>
</evidence>
<evidence type="ECO:0000255" key="2">
    <source>
        <dbReference type="PROSITE-ProRule" id="PRU01231"/>
    </source>
</evidence>
<evidence type="ECO:0000256" key="3">
    <source>
        <dbReference type="SAM" id="MobiDB-lite"/>
    </source>
</evidence>
<organism>
    <name type="scientific">Histophilus somni (strain 2336)</name>
    <name type="common">Haemophilus somnus</name>
    <dbReference type="NCBI Taxonomy" id="228400"/>
    <lineage>
        <taxon>Bacteria</taxon>
        <taxon>Pseudomonadati</taxon>
        <taxon>Pseudomonadota</taxon>
        <taxon>Gammaproteobacteria</taxon>
        <taxon>Pasteurellales</taxon>
        <taxon>Pasteurellaceae</taxon>
        <taxon>Histophilus</taxon>
    </lineage>
</organism>
<accession>B0UVI2</accession>
<feature type="chain" id="PRO_0000385967" description="GTPase Obg">
    <location>
        <begin position="1"/>
        <end position="392"/>
    </location>
</feature>
<feature type="domain" description="Obg" evidence="2">
    <location>
        <begin position="1"/>
        <end position="159"/>
    </location>
</feature>
<feature type="domain" description="OBG-type G" evidence="1">
    <location>
        <begin position="160"/>
        <end position="333"/>
    </location>
</feature>
<feature type="region of interest" description="Disordered" evidence="3">
    <location>
        <begin position="361"/>
        <end position="392"/>
    </location>
</feature>
<feature type="compositionally biased region" description="Acidic residues" evidence="3">
    <location>
        <begin position="365"/>
        <end position="386"/>
    </location>
</feature>
<feature type="binding site" evidence="1">
    <location>
        <begin position="166"/>
        <end position="173"/>
    </location>
    <ligand>
        <name>GTP</name>
        <dbReference type="ChEBI" id="CHEBI:37565"/>
    </ligand>
</feature>
<feature type="binding site" evidence="1">
    <location>
        <position position="173"/>
    </location>
    <ligand>
        <name>Mg(2+)</name>
        <dbReference type="ChEBI" id="CHEBI:18420"/>
    </ligand>
</feature>
<feature type="binding site" evidence="1">
    <location>
        <begin position="191"/>
        <end position="195"/>
    </location>
    <ligand>
        <name>GTP</name>
        <dbReference type="ChEBI" id="CHEBI:37565"/>
    </ligand>
</feature>
<feature type="binding site" evidence="1">
    <location>
        <position position="193"/>
    </location>
    <ligand>
        <name>Mg(2+)</name>
        <dbReference type="ChEBI" id="CHEBI:18420"/>
    </ligand>
</feature>
<feature type="binding site" evidence="1">
    <location>
        <begin position="213"/>
        <end position="216"/>
    </location>
    <ligand>
        <name>GTP</name>
        <dbReference type="ChEBI" id="CHEBI:37565"/>
    </ligand>
</feature>
<feature type="binding site" evidence="1">
    <location>
        <begin position="283"/>
        <end position="286"/>
    </location>
    <ligand>
        <name>GTP</name>
        <dbReference type="ChEBI" id="CHEBI:37565"/>
    </ligand>
</feature>
<feature type="binding site" evidence="1">
    <location>
        <begin position="314"/>
        <end position="316"/>
    </location>
    <ligand>
        <name>GTP</name>
        <dbReference type="ChEBI" id="CHEBI:37565"/>
    </ligand>
</feature>
<reference key="1">
    <citation type="submission" date="2008-02" db="EMBL/GenBank/DDBJ databases">
        <title>Complete sequence of Haemophilus somnus 2336.</title>
        <authorList>
            <consortium name="US DOE Joint Genome Institute"/>
            <person name="Siddaramappa S."/>
            <person name="Duncan A.J."/>
            <person name="Challacombe J.F."/>
            <person name="Rainey D."/>
            <person name="Gillaspy A.F."/>
            <person name="Carson M."/>
            <person name="Gipson J."/>
            <person name="Gipson M."/>
            <person name="Bruce D."/>
            <person name="Detter J.C."/>
            <person name="Han C.S."/>
            <person name="Land M."/>
            <person name="Tapia R."/>
            <person name="Thompson L.S."/>
            <person name="Orvis J."/>
            <person name="Zaitshik J."/>
            <person name="Barnes G."/>
            <person name="Brettin T.S."/>
            <person name="Dyer D.W."/>
            <person name="Inzana T.J."/>
        </authorList>
    </citation>
    <scope>NUCLEOTIDE SEQUENCE [LARGE SCALE GENOMIC DNA]</scope>
    <source>
        <strain>2336</strain>
    </source>
</reference>
<protein>
    <recommendedName>
        <fullName evidence="1">GTPase Obg</fullName>
        <ecNumber evidence="1">3.6.5.-</ecNumber>
    </recommendedName>
    <alternativeName>
        <fullName evidence="1">GTP-binding protein Obg</fullName>
    </alternativeName>
</protein>
<keyword id="KW-0963">Cytoplasm</keyword>
<keyword id="KW-0342">GTP-binding</keyword>
<keyword id="KW-0378">Hydrolase</keyword>
<keyword id="KW-0460">Magnesium</keyword>
<keyword id="KW-0479">Metal-binding</keyword>
<keyword id="KW-0547">Nucleotide-binding</keyword>
<name>OBG_HISS2</name>